<keyword id="KW-0044">Antibiotic</keyword>
<keyword id="KW-0929">Antimicrobial</keyword>
<keyword id="KW-0211">Defensin</keyword>
<keyword id="KW-1015">Disulfide bond</keyword>
<keyword id="KW-0472">Membrane</keyword>
<keyword id="KW-1185">Reference proteome</keyword>
<keyword id="KW-0964">Secreted</keyword>
<keyword id="KW-0732">Signal</keyword>
<sequence>MKTHYFLLVMICFLFSQMEPGVGILTSLGRRTDQYKCLQHGGFCLRSSCPSNTKLQGTCKPDKPNCCKS</sequence>
<evidence type="ECO:0000250" key="1"/>
<evidence type="ECO:0000250" key="2">
    <source>
        <dbReference type="UniProtKB" id="P60022"/>
    </source>
</evidence>
<evidence type="ECO:0000255" key="3"/>
<evidence type="ECO:0000269" key="4">
    <source>
    </source>
</evidence>
<evidence type="ECO:0000305" key="5"/>
<accession>P56386</accession>
<name>DEFB1_MOUSE</name>
<protein>
    <recommendedName>
        <fullName>Beta-defensin 1</fullName>
        <shortName>BD-1</shortName>
        <shortName>mBD-1</shortName>
    </recommendedName>
    <alternativeName>
        <fullName>Defensin, beta 1</fullName>
    </alternativeName>
</protein>
<proteinExistence type="evidence at transcript level"/>
<comment type="function">
    <text evidence="2">Has bactericidal activity. May act as a ligand for C-C chemokine receptor CCR6. Positively regulates the sperm motility and bactericidal activity in a CCR6-dependent manner. Binds to CCR6 and triggers Ca2+ mobilization in the sperm which is important for its motility.</text>
</comment>
<comment type="subunit">
    <text evidence="2">Monomer. Homodimer.</text>
</comment>
<comment type="subcellular location">
    <subcellularLocation>
        <location evidence="2">Secreted</location>
    </subcellularLocation>
    <subcellularLocation>
        <location evidence="2">Membrane</location>
    </subcellularLocation>
    <text evidence="2">Associates with tumor cell membrane-derived microvesicles.</text>
</comment>
<comment type="tissue specificity">
    <text evidence="4">Detected in kidney.</text>
</comment>
<comment type="similarity">
    <text evidence="5">Belongs to the beta-defensin family.</text>
</comment>
<reference key="1">
    <citation type="submission" date="1996-09" db="EMBL/GenBank/DDBJ databases">
        <authorList>
            <person name="Marra M."/>
            <person name="Hillier L."/>
            <person name="Allen M."/>
            <person name="Bowles M."/>
            <person name="Dietrich N."/>
            <person name="Dubuque T."/>
            <person name="Geisel S."/>
            <person name="Kucaba T."/>
            <person name="Lacy M."/>
            <person name="Le M."/>
            <person name="Martin J."/>
            <person name="Morris M."/>
            <person name="Schellenberg K."/>
            <person name="Steptoe M."/>
            <person name="Tan F."/>
            <person name="Underwood K."/>
            <person name="Moore B."/>
            <person name="Theising B."/>
            <person name="Wylie T."/>
            <person name="Lennon G."/>
            <person name="Soares B."/>
            <person name="Wilson R."/>
            <person name="Waterston R."/>
        </authorList>
    </citation>
    <scope>NUCLEOTIDE SEQUENCE [MRNA]</scope>
</reference>
<reference key="2">
    <citation type="journal article" date="1997" name="FEBS Lett.">
        <title>The mouse genome encodes a single homolog of the antimicrobial peptide human beta-defensin 1.</title>
        <authorList>
            <person name="Huttner K.M."/>
            <person name="Kozak C.A."/>
            <person name="Bevins C.L."/>
        </authorList>
    </citation>
    <scope>NUCLEOTIDE SEQUENCE [GENOMIC DNA]</scope>
</reference>
<reference key="3">
    <citation type="journal article" date="2004" name="Genome Res.">
        <title>The status, quality, and expansion of the NIH full-length cDNA project: the Mammalian Gene Collection (MGC).</title>
        <authorList>
            <consortium name="The MGC Project Team"/>
        </authorList>
    </citation>
    <scope>NUCLEOTIDE SEQUENCE [LARGE SCALE MRNA]</scope>
    <source>
        <strain>FVB/N</strain>
        <tissue>Kidney</tissue>
    </source>
</reference>
<reference key="4">
    <citation type="journal article" date="2000" name="J. Biol. Chem.">
        <title>A novel murine beta-defensin expressed in tongue, esophagus, and trachea.</title>
        <authorList>
            <person name="Jia H.P."/>
            <person name="Wowk S.A."/>
            <person name="Schutte B.C."/>
            <person name="Lee S.K."/>
            <person name="Vivado A."/>
            <person name="Tack B.F."/>
            <person name="Bevins C.L."/>
            <person name="McCray P.B. Jr."/>
        </authorList>
    </citation>
    <scope>TISSUE SPECIFICITY</scope>
    <source>
        <strain>129/SvJ</strain>
        <strain>C57BL/6J</strain>
        <strain>FVB/NJ</strain>
        <tissue>Lung</tissue>
    </source>
</reference>
<feature type="signal peptide" evidence="3">
    <location>
        <begin position="1"/>
        <end position="21"/>
    </location>
</feature>
<feature type="propeptide" id="PRO_0000006925" evidence="1">
    <location>
        <begin position="22"/>
        <end position="32"/>
    </location>
</feature>
<feature type="peptide" id="PRO_0000006926" description="Beta-defensin 1">
    <location>
        <begin position="33"/>
        <end position="69"/>
    </location>
</feature>
<feature type="disulfide bond" evidence="1">
    <location>
        <begin position="37"/>
        <end position="66"/>
    </location>
</feature>
<feature type="disulfide bond" evidence="1">
    <location>
        <begin position="44"/>
        <end position="59"/>
    </location>
</feature>
<feature type="disulfide bond" evidence="1">
    <location>
        <begin position="49"/>
        <end position="67"/>
    </location>
</feature>
<gene>
    <name type="primary">Defb1</name>
</gene>
<organism>
    <name type="scientific">Mus musculus</name>
    <name type="common">Mouse</name>
    <dbReference type="NCBI Taxonomy" id="10090"/>
    <lineage>
        <taxon>Eukaryota</taxon>
        <taxon>Metazoa</taxon>
        <taxon>Chordata</taxon>
        <taxon>Craniata</taxon>
        <taxon>Vertebrata</taxon>
        <taxon>Euteleostomi</taxon>
        <taxon>Mammalia</taxon>
        <taxon>Eutheria</taxon>
        <taxon>Euarchontoglires</taxon>
        <taxon>Glires</taxon>
        <taxon>Rodentia</taxon>
        <taxon>Myomorpha</taxon>
        <taxon>Muroidea</taxon>
        <taxon>Muridae</taxon>
        <taxon>Murinae</taxon>
        <taxon>Mus</taxon>
        <taxon>Mus</taxon>
    </lineage>
</organism>
<dbReference type="EMBL" id="AA071757">
    <property type="status" value="NOT_ANNOTATED_CDS"/>
    <property type="molecule type" value="mRNA"/>
</dbReference>
<dbReference type="EMBL" id="AA065510">
    <property type="status" value="NOT_ANNOTATED_CDS"/>
    <property type="molecule type" value="mRNA"/>
</dbReference>
<dbReference type="EMBL" id="AA108061">
    <property type="status" value="NOT_ANNOTATED_CDS"/>
    <property type="molecule type" value="mRNA"/>
</dbReference>
<dbReference type="EMBL" id="AA107538">
    <property type="status" value="NOT_ANNOTATED_CDS"/>
    <property type="molecule type" value="mRNA"/>
</dbReference>
<dbReference type="EMBL" id="AA105324">
    <property type="status" value="NOT_ANNOTATED_CDS"/>
    <property type="molecule type" value="mRNA"/>
</dbReference>
<dbReference type="EMBL" id="AF003525">
    <property type="protein sequence ID" value="AAB72003.1"/>
    <property type="molecule type" value="Genomic_DNA"/>
</dbReference>
<dbReference type="EMBL" id="AF003524">
    <property type="protein sequence ID" value="AAB72003.1"/>
    <property type="status" value="JOINED"/>
    <property type="molecule type" value="Genomic_DNA"/>
</dbReference>
<dbReference type="EMBL" id="BC024380">
    <property type="protein sequence ID" value="AAH24380.1"/>
    <property type="molecule type" value="mRNA"/>
</dbReference>
<dbReference type="CCDS" id="CCDS40282.1"/>
<dbReference type="RefSeq" id="NP_031869.1">
    <property type="nucleotide sequence ID" value="NM_007843.3"/>
</dbReference>
<dbReference type="SMR" id="P56386"/>
<dbReference type="FunCoup" id="P56386">
    <property type="interactions" value="62"/>
</dbReference>
<dbReference type="STRING" id="10090.ENSMUSP00000051754"/>
<dbReference type="PaxDb" id="10090-ENSMUSP00000051754"/>
<dbReference type="ProteomicsDB" id="279364"/>
<dbReference type="DNASU" id="13214"/>
<dbReference type="Ensembl" id="ENSMUST00000051017.9">
    <property type="protein sequence ID" value="ENSMUSP00000051754.9"/>
    <property type="gene ID" value="ENSMUSG00000044748.9"/>
</dbReference>
<dbReference type="GeneID" id="13214"/>
<dbReference type="KEGG" id="mmu:13214"/>
<dbReference type="UCSC" id="uc009lby.2">
    <property type="organism name" value="mouse"/>
</dbReference>
<dbReference type="AGR" id="MGI:1096878"/>
<dbReference type="CTD" id="1672"/>
<dbReference type="MGI" id="MGI:1096878">
    <property type="gene designation" value="Defb1"/>
</dbReference>
<dbReference type="VEuPathDB" id="HostDB:ENSMUSG00000044748"/>
<dbReference type="eggNOG" id="ENOG502TDMV">
    <property type="taxonomic scope" value="Eukaryota"/>
</dbReference>
<dbReference type="GeneTree" id="ENSGT00940000166542"/>
<dbReference type="HOGENOM" id="CLU_189296_1_0_1"/>
<dbReference type="InParanoid" id="P56386"/>
<dbReference type="OMA" id="SGKAKCC"/>
<dbReference type="OrthoDB" id="9622366at2759"/>
<dbReference type="PhylomeDB" id="P56386"/>
<dbReference type="Reactome" id="R-MMU-1461957">
    <property type="pathway name" value="Beta defensins"/>
</dbReference>
<dbReference type="Reactome" id="R-MMU-1461973">
    <property type="pathway name" value="Defensins"/>
</dbReference>
<dbReference type="BioGRID-ORCS" id="13214">
    <property type="hits" value="1 hit in 74 CRISPR screens"/>
</dbReference>
<dbReference type="ChiTaRS" id="Defb1">
    <property type="organism name" value="mouse"/>
</dbReference>
<dbReference type="PRO" id="PR:P56386"/>
<dbReference type="Proteomes" id="UP000000589">
    <property type="component" value="Chromosome 8"/>
</dbReference>
<dbReference type="RNAct" id="P56386">
    <property type="molecule type" value="protein"/>
</dbReference>
<dbReference type="Bgee" id="ENSMUSG00000044748">
    <property type="expression patterns" value="Expressed in prostate gland ventral lobe and 76 other cell types or tissues"/>
</dbReference>
<dbReference type="ExpressionAtlas" id="P56386">
    <property type="expression patterns" value="baseline and differential"/>
</dbReference>
<dbReference type="GO" id="GO:0005615">
    <property type="term" value="C:extracellular space"/>
    <property type="evidence" value="ECO:0000266"/>
    <property type="project" value="MGI"/>
</dbReference>
<dbReference type="GO" id="GO:0016020">
    <property type="term" value="C:membrane"/>
    <property type="evidence" value="ECO:0000250"/>
    <property type="project" value="UniProtKB"/>
</dbReference>
<dbReference type="GO" id="GO:1990742">
    <property type="term" value="C:microvesicle"/>
    <property type="evidence" value="ECO:0000250"/>
    <property type="project" value="UniProtKB"/>
</dbReference>
<dbReference type="GO" id="GO:0097225">
    <property type="term" value="C:sperm midpiece"/>
    <property type="evidence" value="ECO:0000250"/>
    <property type="project" value="UniProtKB"/>
</dbReference>
<dbReference type="GO" id="GO:0031731">
    <property type="term" value="F:CCR6 chemokine receptor binding"/>
    <property type="evidence" value="ECO:0000250"/>
    <property type="project" value="UniProtKB"/>
</dbReference>
<dbReference type="GO" id="GO:0042802">
    <property type="term" value="F:identical protein binding"/>
    <property type="evidence" value="ECO:0000250"/>
    <property type="project" value="UniProtKB"/>
</dbReference>
<dbReference type="GO" id="GO:0019722">
    <property type="term" value="P:calcium-mediated signaling"/>
    <property type="evidence" value="ECO:0000250"/>
    <property type="project" value="UniProtKB"/>
</dbReference>
<dbReference type="GO" id="GO:0042742">
    <property type="term" value="P:defense response to bacterium"/>
    <property type="evidence" value="ECO:0000266"/>
    <property type="project" value="MGI"/>
</dbReference>
<dbReference type="GO" id="GO:0050829">
    <property type="term" value="P:defense response to Gram-negative bacterium"/>
    <property type="evidence" value="ECO:0000250"/>
    <property type="project" value="UniProtKB"/>
</dbReference>
<dbReference type="GO" id="GO:0050830">
    <property type="term" value="P:defense response to Gram-positive bacterium"/>
    <property type="evidence" value="ECO:0000250"/>
    <property type="project" value="UniProtKB"/>
</dbReference>
<dbReference type="GO" id="GO:0045087">
    <property type="term" value="P:innate immune response"/>
    <property type="evidence" value="ECO:0000315"/>
    <property type="project" value="UniProtKB"/>
</dbReference>
<dbReference type="GO" id="GO:0060474">
    <property type="term" value="P:positive regulation of flagellated sperm motility involved in capacitation"/>
    <property type="evidence" value="ECO:0000250"/>
    <property type="project" value="UniProtKB"/>
</dbReference>
<dbReference type="GO" id="GO:0009617">
    <property type="term" value="P:response to bacterium"/>
    <property type="evidence" value="ECO:0000315"/>
    <property type="project" value="UniProtKB"/>
</dbReference>
<dbReference type="GO" id="GO:0033574">
    <property type="term" value="P:response to testosterone"/>
    <property type="evidence" value="ECO:0007669"/>
    <property type="project" value="Ensembl"/>
</dbReference>
<dbReference type="FunFam" id="3.10.360.10:FF:000001">
    <property type="entry name" value="Beta-defensin 1"/>
    <property type="match status" value="1"/>
</dbReference>
<dbReference type="Gene3D" id="3.10.360.10">
    <property type="entry name" value="Antimicrobial Peptide, Beta-defensin 2, Chain A"/>
    <property type="match status" value="1"/>
</dbReference>
<dbReference type="InterPro" id="IPR001855">
    <property type="entry name" value="Defensin_beta-like"/>
</dbReference>
<dbReference type="PANTHER" id="PTHR21388:SF9">
    <property type="entry name" value="BETA-DEFENSIN 1"/>
    <property type="match status" value="1"/>
</dbReference>
<dbReference type="PANTHER" id="PTHR21388">
    <property type="entry name" value="BETA-DEFENSIN-RELATED"/>
    <property type="match status" value="1"/>
</dbReference>
<dbReference type="Pfam" id="PF00711">
    <property type="entry name" value="Defensin_beta"/>
    <property type="match status" value="1"/>
</dbReference>
<dbReference type="SUPFAM" id="SSF57392">
    <property type="entry name" value="Defensin-like"/>
    <property type="match status" value="1"/>
</dbReference>